<accession>Q5M2B3</accession>
<protein>
    <recommendedName>
        <fullName evidence="1">Large ribosomal subunit protein uL3</fullName>
    </recommendedName>
    <alternativeName>
        <fullName evidence="3">50S ribosomal protein L3</fullName>
    </alternativeName>
</protein>
<keyword id="KW-1185">Reference proteome</keyword>
<keyword id="KW-0687">Ribonucleoprotein</keyword>
<keyword id="KW-0689">Ribosomal protein</keyword>
<keyword id="KW-0694">RNA-binding</keyword>
<keyword id="KW-0699">rRNA-binding</keyword>
<feature type="chain" id="PRO_0000241418" description="Large ribosomal subunit protein uL3">
    <location>
        <begin position="1"/>
        <end position="208"/>
    </location>
</feature>
<feature type="region of interest" description="Disordered" evidence="2">
    <location>
        <begin position="123"/>
        <end position="146"/>
    </location>
</feature>
<sequence length="208" mass="22420">MTKGILGKKVGMTQIFTEAGEFIPVTVIEATPNVVLQVKTVETDGYEAVQVGFDDKREVLSNKPAKGHVAKANTAPKRFIREFKNIEGLEVGSEITVDIFEAGDVVDVTGTSKGKGFQGVIKRHGQSRGPMAHGSRYHRRPGSMGPVAPNRVFKNKHLAGRMGGNRVTIQNLEIVQVIPEKNVILIKGNVPGAKKSLITIKSAVKAAK</sequence>
<dbReference type="EMBL" id="CP000023">
    <property type="protein sequence ID" value="AAV61532.1"/>
    <property type="molecule type" value="Genomic_DNA"/>
</dbReference>
<dbReference type="RefSeq" id="WP_002952166.1">
    <property type="nucleotide sequence ID" value="NC_006448.1"/>
</dbReference>
<dbReference type="SMR" id="Q5M2B3"/>
<dbReference type="STRING" id="264199.stu1934"/>
<dbReference type="GeneID" id="66899662"/>
<dbReference type="KEGG" id="stl:stu1934"/>
<dbReference type="PATRIC" id="fig|264199.4.peg.1919"/>
<dbReference type="eggNOG" id="COG0087">
    <property type="taxonomic scope" value="Bacteria"/>
</dbReference>
<dbReference type="HOGENOM" id="CLU_044142_4_1_9"/>
<dbReference type="Proteomes" id="UP000001170">
    <property type="component" value="Chromosome"/>
</dbReference>
<dbReference type="GO" id="GO:0022625">
    <property type="term" value="C:cytosolic large ribosomal subunit"/>
    <property type="evidence" value="ECO:0007669"/>
    <property type="project" value="TreeGrafter"/>
</dbReference>
<dbReference type="GO" id="GO:0019843">
    <property type="term" value="F:rRNA binding"/>
    <property type="evidence" value="ECO:0007669"/>
    <property type="project" value="UniProtKB-UniRule"/>
</dbReference>
<dbReference type="GO" id="GO:0003735">
    <property type="term" value="F:structural constituent of ribosome"/>
    <property type="evidence" value="ECO:0007669"/>
    <property type="project" value="InterPro"/>
</dbReference>
<dbReference type="GO" id="GO:0006412">
    <property type="term" value="P:translation"/>
    <property type="evidence" value="ECO:0007669"/>
    <property type="project" value="UniProtKB-UniRule"/>
</dbReference>
<dbReference type="FunFam" id="2.40.30.10:FF:000004">
    <property type="entry name" value="50S ribosomal protein L3"/>
    <property type="match status" value="1"/>
</dbReference>
<dbReference type="FunFam" id="3.30.160.810:FF:000002">
    <property type="entry name" value="50S ribosomal protein L3"/>
    <property type="match status" value="1"/>
</dbReference>
<dbReference type="Gene3D" id="3.30.160.810">
    <property type="match status" value="1"/>
</dbReference>
<dbReference type="Gene3D" id="2.40.30.10">
    <property type="entry name" value="Translation factors"/>
    <property type="match status" value="1"/>
</dbReference>
<dbReference type="HAMAP" id="MF_01325_B">
    <property type="entry name" value="Ribosomal_uL3_B"/>
    <property type="match status" value="1"/>
</dbReference>
<dbReference type="InterPro" id="IPR000597">
    <property type="entry name" value="Ribosomal_uL3"/>
</dbReference>
<dbReference type="InterPro" id="IPR019927">
    <property type="entry name" value="Ribosomal_uL3_bac/org-type"/>
</dbReference>
<dbReference type="InterPro" id="IPR019926">
    <property type="entry name" value="Ribosomal_uL3_CS"/>
</dbReference>
<dbReference type="InterPro" id="IPR009000">
    <property type="entry name" value="Transl_B-barrel_sf"/>
</dbReference>
<dbReference type="NCBIfam" id="TIGR03625">
    <property type="entry name" value="L3_bact"/>
    <property type="match status" value="1"/>
</dbReference>
<dbReference type="PANTHER" id="PTHR11229">
    <property type="entry name" value="50S RIBOSOMAL PROTEIN L3"/>
    <property type="match status" value="1"/>
</dbReference>
<dbReference type="PANTHER" id="PTHR11229:SF16">
    <property type="entry name" value="LARGE RIBOSOMAL SUBUNIT PROTEIN UL3C"/>
    <property type="match status" value="1"/>
</dbReference>
<dbReference type="Pfam" id="PF00297">
    <property type="entry name" value="Ribosomal_L3"/>
    <property type="match status" value="1"/>
</dbReference>
<dbReference type="SUPFAM" id="SSF50447">
    <property type="entry name" value="Translation proteins"/>
    <property type="match status" value="1"/>
</dbReference>
<dbReference type="PROSITE" id="PS00474">
    <property type="entry name" value="RIBOSOMAL_L3"/>
    <property type="match status" value="1"/>
</dbReference>
<gene>
    <name evidence="1" type="primary">rplC</name>
    <name type="ordered locus">stu1934</name>
</gene>
<evidence type="ECO:0000255" key="1">
    <source>
        <dbReference type="HAMAP-Rule" id="MF_01325"/>
    </source>
</evidence>
<evidence type="ECO:0000256" key="2">
    <source>
        <dbReference type="SAM" id="MobiDB-lite"/>
    </source>
</evidence>
<evidence type="ECO:0000305" key="3"/>
<proteinExistence type="inferred from homology"/>
<reference key="1">
    <citation type="journal article" date="2004" name="Nat. Biotechnol.">
        <title>Complete sequence and comparative genome analysis of the dairy bacterium Streptococcus thermophilus.</title>
        <authorList>
            <person name="Bolotin A."/>
            <person name="Quinquis B."/>
            <person name="Renault P."/>
            <person name="Sorokin A."/>
            <person name="Ehrlich S.D."/>
            <person name="Kulakauskas S."/>
            <person name="Lapidus A."/>
            <person name="Goltsman E."/>
            <person name="Mazur M."/>
            <person name="Pusch G.D."/>
            <person name="Fonstein M."/>
            <person name="Overbeek R."/>
            <person name="Kyprides N."/>
            <person name="Purnelle B."/>
            <person name="Prozzi D."/>
            <person name="Ngui K."/>
            <person name="Masuy D."/>
            <person name="Hancy F."/>
            <person name="Burteau S."/>
            <person name="Boutry M."/>
            <person name="Delcour J."/>
            <person name="Goffeau A."/>
            <person name="Hols P."/>
        </authorList>
    </citation>
    <scope>NUCLEOTIDE SEQUENCE [LARGE SCALE GENOMIC DNA]</scope>
    <source>
        <strain>ATCC BAA-250 / LMG 18311</strain>
    </source>
</reference>
<comment type="function">
    <text evidence="1">One of the primary rRNA binding proteins, it binds directly near the 3'-end of the 23S rRNA, where it nucleates assembly of the 50S subunit.</text>
</comment>
<comment type="subunit">
    <text evidence="1">Part of the 50S ribosomal subunit. Forms a cluster with proteins L14 and L19.</text>
</comment>
<comment type="similarity">
    <text evidence="1">Belongs to the universal ribosomal protein uL3 family.</text>
</comment>
<organism>
    <name type="scientific">Streptococcus thermophilus (strain ATCC BAA-250 / LMG 18311)</name>
    <dbReference type="NCBI Taxonomy" id="264199"/>
    <lineage>
        <taxon>Bacteria</taxon>
        <taxon>Bacillati</taxon>
        <taxon>Bacillota</taxon>
        <taxon>Bacilli</taxon>
        <taxon>Lactobacillales</taxon>
        <taxon>Streptococcaceae</taxon>
        <taxon>Streptococcus</taxon>
    </lineage>
</organism>
<name>RL3_STRT2</name>